<sequence>MAISKEDVLEYISNLSVLELSELVKEFEEKFGVSAAPVMIAGGAAAGGAAAAAEEKTEFDIVLTDGGAKKIEVIKIVRALTGLGLKEAKDAVEQTPSTLKEGVAKAEAEEAKKQLEEAGAKVELK</sequence>
<feature type="chain" id="PRO_0000243405" description="Large ribosomal subunit protein bL12">
    <location>
        <begin position="1"/>
        <end position="125"/>
    </location>
</feature>
<reference key="1">
    <citation type="journal article" date="2005" name="PLoS Biol.">
        <title>Major structural differences and novel potential virulence mechanisms from the genomes of multiple Campylobacter species.</title>
        <authorList>
            <person name="Fouts D.E."/>
            <person name="Mongodin E.F."/>
            <person name="Mandrell R.E."/>
            <person name="Miller W.G."/>
            <person name="Rasko D.A."/>
            <person name="Ravel J."/>
            <person name="Brinkac L.M."/>
            <person name="DeBoy R.T."/>
            <person name="Parker C.T."/>
            <person name="Daugherty S.C."/>
            <person name="Dodson R.J."/>
            <person name="Durkin A.S."/>
            <person name="Madupu R."/>
            <person name="Sullivan S.A."/>
            <person name="Shetty J.U."/>
            <person name="Ayodeji M.A."/>
            <person name="Shvartsbeyn A."/>
            <person name="Schatz M.C."/>
            <person name="Badger J.H."/>
            <person name="Fraser C.M."/>
            <person name="Nelson K.E."/>
        </authorList>
    </citation>
    <scope>NUCLEOTIDE SEQUENCE [LARGE SCALE GENOMIC DNA]</scope>
    <source>
        <strain>RM1221</strain>
    </source>
</reference>
<comment type="function">
    <text evidence="1">Forms part of the ribosomal stalk which helps the ribosome interact with GTP-bound translation factors. Is thus essential for accurate translation.</text>
</comment>
<comment type="subunit">
    <text evidence="1">Homodimer. Part of the ribosomal stalk of the 50S ribosomal subunit. Forms a multimeric L10(L12)X complex, where L10 forms an elongated spine to which 2 to 4 L12 dimers bind in a sequential fashion. Binds GTP-bound translation factors.</text>
</comment>
<comment type="similarity">
    <text evidence="1">Belongs to the bacterial ribosomal protein bL12 family.</text>
</comment>
<dbReference type="EMBL" id="CP000025">
    <property type="protein sequence ID" value="AAW35114.1"/>
    <property type="molecule type" value="Genomic_DNA"/>
</dbReference>
<dbReference type="RefSeq" id="WP_002859903.1">
    <property type="nucleotide sequence ID" value="NC_003912.7"/>
</dbReference>
<dbReference type="SMR" id="Q5HVZ0"/>
<dbReference type="KEGG" id="cjr:CJE0527"/>
<dbReference type="HOGENOM" id="CLU_086499_3_0_7"/>
<dbReference type="GO" id="GO:0022625">
    <property type="term" value="C:cytosolic large ribosomal subunit"/>
    <property type="evidence" value="ECO:0007669"/>
    <property type="project" value="TreeGrafter"/>
</dbReference>
<dbReference type="GO" id="GO:0003729">
    <property type="term" value="F:mRNA binding"/>
    <property type="evidence" value="ECO:0007669"/>
    <property type="project" value="TreeGrafter"/>
</dbReference>
<dbReference type="GO" id="GO:0003735">
    <property type="term" value="F:structural constituent of ribosome"/>
    <property type="evidence" value="ECO:0007669"/>
    <property type="project" value="InterPro"/>
</dbReference>
<dbReference type="GO" id="GO:0006412">
    <property type="term" value="P:translation"/>
    <property type="evidence" value="ECO:0007669"/>
    <property type="project" value="UniProtKB-UniRule"/>
</dbReference>
<dbReference type="CDD" id="cd00387">
    <property type="entry name" value="Ribosomal_L7_L12"/>
    <property type="match status" value="1"/>
</dbReference>
<dbReference type="FunFam" id="3.30.1390.10:FF:000001">
    <property type="entry name" value="50S ribosomal protein L7/L12"/>
    <property type="match status" value="1"/>
</dbReference>
<dbReference type="Gene3D" id="3.30.1390.10">
    <property type="match status" value="1"/>
</dbReference>
<dbReference type="Gene3D" id="1.20.5.710">
    <property type="entry name" value="Single helix bin"/>
    <property type="match status" value="1"/>
</dbReference>
<dbReference type="HAMAP" id="MF_00368">
    <property type="entry name" value="Ribosomal_bL12"/>
    <property type="match status" value="1"/>
</dbReference>
<dbReference type="InterPro" id="IPR000206">
    <property type="entry name" value="Ribosomal_bL12"/>
</dbReference>
<dbReference type="InterPro" id="IPR013823">
    <property type="entry name" value="Ribosomal_bL12_C"/>
</dbReference>
<dbReference type="InterPro" id="IPR014719">
    <property type="entry name" value="Ribosomal_bL12_C/ClpS-like"/>
</dbReference>
<dbReference type="InterPro" id="IPR008932">
    <property type="entry name" value="Ribosomal_bL12_oligo"/>
</dbReference>
<dbReference type="InterPro" id="IPR036235">
    <property type="entry name" value="Ribosomal_bL12_oligo_N_sf"/>
</dbReference>
<dbReference type="NCBIfam" id="TIGR00855">
    <property type="entry name" value="L12"/>
    <property type="match status" value="1"/>
</dbReference>
<dbReference type="PANTHER" id="PTHR45987">
    <property type="entry name" value="39S RIBOSOMAL PROTEIN L12"/>
    <property type="match status" value="1"/>
</dbReference>
<dbReference type="PANTHER" id="PTHR45987:SF4">
    <property type="entry name" value="LARGE RIBOSOMAL SUBUNIT PROTEIN BL12M"/>
    <property type="match status" value="1"/>
</dbReference>
<dbReference type="Pfam" id="PF00542">
    <property type="entry name" value="Ribosomal_L12"/>
    <property type="match status" value="1"/>
</dbReference>
<dbReference type="Pfam" id="PF16320">
    <property type="entry name" value="Ribosomal_L12_N"/>
    <property type="match status" value="1"/>
</dbReference>
<dbReference type="SUPFAM" id="SSF54736">
    <property type="entry name" value="ClpS-like"/>
    <property type="match status" value="1"/>
</dbReference>
<dbReference type="SUPFAM" id="SSF48300">
    <property type="entry name" value="Ribosomal protein L7/12, oligomerisation (N-terminal) domain"/>
    <property type="match status" value="1"/>
</dbReference>
<organism>
    <name type="scientific">Campylobacter jejuni (strain RM1221)</name>
    <dbReference type="NCBI Taxonomy" id="195099"/>
    <lineage>
        <taxon>Bacteria</taxon>
        <taxon>Pseudomonadati</taxon>
        <taxon>Campylobacterota</taxon>
        <taxon>Epsilonproteobacteria</taxon>
        <taxon>Campylobacterales</taxon>
        <taxon>Campylobacteraceae</taxon>
        <taxon>Campylobacter</taxon>
    </lineage>
</organism>
<protein>
    <recommendedName>
        <fullName evidence="1">Large ribosomal subunit protein bL12</fullName>
    </recommendedName>
    <alternativeName>
        <fullName evidence="2">50S ribosomal protein L7/L12</fullName>
    </alternativeName>
</protein>
<gene>
    <name evidence="1" type="primary">rplL</name>
    <name type="ordered locus">CJE0527</name>
</gene>
<name>RL7_CAMJR</name>
<accession>Q5HVZ0</accession>
<evidence type="ECO:0000255" key="1">
    <source>
        <dbReference type="HAMAP-Rule" id="MF_00368"/>
    </source>
</evidence>
<evidence type="ECO:0000305" key="2"/>
<proteinExistence type="inferred from homology"/>
<keyword id="KW-0687">Ribonucleoprotein</keyword>
<keyword id="KW-0689">Ribosomal protein</keyword>